<name>SMD1_CAEEL</name>
<proteinExistence type="evidence at protein level"/>
<organism>
    <name type="scientific">Caenorhabditis elegans</name>
    <dbReference type="NCBI Taxonomy" id="6239"/>
    <lineage>
        <taxon>Eukaryota</taxon>
        <taxon>Metazoa</taxon>
        <taxon>Ecdysozoa</taxon>
        <taxon>Nematoda</taxon>
        <taxon>Chromadorea</taxon>
        <taxon>Rhabditida</taxon>
        <taxon>Rhabditina</taxon>
        <taxon>Rhabditomorpha</taxon>
        <taxon>Rhabditoidea</taxon>
        <taxon>Rhabditidae</taxon>
        <taxon>Peloderinae</taxon>
        <taxon>Caenorhabditis</taxon>
    </lineage>
</organism>
<reference key="1">
    <citation type="journal article" date="1998" name="Science">
        <title>Genome sequence of the nematode C. elegans: a platform for investigating biology.</title>
        <authorList>
            <consortium name="The C. elegans sequencing consortium"/>
        </authorList>
    </citation>
    <scope>NUCLEOTIDE SEQUENCE [LARGE SCALE GENOMIC DNA]</scope>
    <source>
        <strain>Bristol N2</strain>
    </source>
</reference>
<feature type="chain" id="PRO_0000122203" description="Probable small nuclear ribonucleoprotein Sm D1">
    <location>
        <begin position="1"/>
        <end position="126"/>
    </location>
</feature>
<feature type="domain" description="Sm" evidence="2">
    <location>
        <begin position="2"/>
        <end position="74"/>
    </location>
</feature>
<feature type="region of interest" description="Disordered" evidence="3">
    <location>
        <begin position="86"/>
        <end position="126"/>
    </location>
</feature>
<feature type="compositionally biased region" description="Basic residues" evidence="3">
    <location>
        <begin position="99"/>
        <end position="126"/>
    </location>
</feature>
<comment type="function">
    <text evidence="1">Plays a role in pre-mRNA splicing as a core component of the spliceosomal U1, U2, U4 and U5 small nuclear ribonucleoproteins (snRNPs), the building blocks of the spliceosome (By similarity).</text>
</comment>
<comment type="subcellular location">
    <subcellularLocation>
        <location evidence="1">Nucleus</location>
    </subcellularLocation>
    <subcellularLocation>
        <location evidence="1">Cytoplasm</location>
        <location evidence="1">Cytosol</location>
    </subcellularLocation>
</comment>
<comment type="similarity">
    <text evidence="4">Belongs to the snRNP core protein family.</text>
</comment>
<protein>
    <recommendedName>
        <fullName>Probable small nuclear ribonucleoprotein Sm D1</fullName>
        <shortName>Sm-D1</shortName>
    </recommendedName>
    <alternativeName>
        <fullName>snRNP core protein D1</fullName>
    </alternativeName>
</protein>
<keyword id="KW-0002">3D-structure</keyword>
<keyword id="KW-0963">Cytoplasm</keyword>
<keyword id="KW-0507">mRNA processing</keyword>
<keyword id="KW-0508">mRNA splicing</keyword>
<keyword id="KW-0539">Nucleus</keyword>
<keyword id="KW-1185">Reference proteome</keyword>
<keyword id="KW-0687">Ribonucleoprotein</keyword>
<keyword id="KW-0747">Spliceosome</keyword>
<dbReference type="EMBL" id="FO081595">
    <property type="protein sequence ID" value="CCD72707.1"/>
    <property type="molecule type" value="Genomic_DNA"/>
</dbReference>
<dbReference type="PIR" id="T16952">
    <property type="entry name" value="T16952"/>
</dbReference>
<dbReference type="RefSeq" id="NP_495306.1">
    <property type="nucleotide sequence ID" value="NM_062905.8"/>
</dbReference>
<dbReference type="PDB" id="8RO0">
    <property type="method" value="EM"/>
    <property type="resolution" value="2.90 A"/>
    <property type="chains" value="c/j=1-126"/>
</dbReference>
<dbReference type="PDB" id="8RO1">
    <property type="method" value="EM"/>
    <property type="resolution" value="3.00 A"/>
    <property type="chains" value="c/j=1-126"/>
</dbReference>
<dbReference type="PDBsum" id="8RO0"/>
<dbReference type="PDBsum" id="8RO1"/>
<dbReference type="SMR" id="Q10013"/>
<dbReference type="BioGRID" id="39411">
    <property type="interactions" value="47"/>
</dbReference>
<dbReference type="FunCoup" id="Q10013">
    <property type="interactions" value="2566"/>
</dbReference>
<dbReference type="IntAct" id="Q10013">
    <property type="interactions" value="2"/>
</dbReference>
<dbReference type="STRING" id="6239.T28D9.10a.1"/>
<dbReference type="PaxDb" id="6239-T28D9.10a"/>
<dbReference type="PeptideAtlas" id="Q10013"/>
<dbReference type="EnsemblMetazoa" id="T28D9.10a.1">
    <property type="protein sequence ID" value="T28D9.10a.1"/>
    <property type="gene ID" value="WBGene00004916"/>
</dbReference>
<dbReference type="GeneID" id="174072"/>
<dbReference type="KEGG" id="cel:CELE_T28D9.10"/>
<dbReference type="UCSC" id="T28D9.10.1">
    <property type="organism name" value="c. elegans"/>
</dbReference>
<dbReference type="AGR" id="WB:WBGene00004916"/>
<dbReference type="CTD" id="174072"/>
<dbReference type="WormBase" id="T28D9.10a">
    <property type="protein sequence ID" value="CE02065"/>
    <property type="gene ID" value="WBGene00004916"/>
    <property type="gene designation" value="snr-3"/>
</dbReference>
<dbReference type="eggNOG" id="KOG3428">
    <property type="taxonomic scope" value="Eukaryota"/>
</dbReference>
<dbReference type="GeneTree" id="ENSGT00510000047245"/>
<dbReference type="HOGENOM" id="CLU_123956_3_0_1"/>
<dbReference type="InParanoid" id="Q10013"/>
<dbReference type="OMA" id="TFLMKLT"/>
<dbReference type="OrthoDB" id="9626941at2759"/>
<dbReference type="PhylomeDB" id="Q10013"/>
<dbReference type="Reactome" id="R-CEL-191859">
    <property type="pathway name" value="snRNP Assembly"/>
</dbReference>
<dbReference type="Reactome" id="R-CEL-72163">
    <property type="pathway name" value="mRNA Splicing - Major Pathway"/>
</dbReference>
<dbReference type="Reactome" id="R-CEL-72165">
    <property type="pathway name" value="mRNA Splicing - Minor Pathway"/>
</dbReference>
<dbReference type="PRO" id="PR:Q10013"/>
<dbReference type="Proteomes" id="UP000001940">
    <property type="component" value="Chromosome II"/>
</dbReference>
<dbReference type="Bgee" id="WBGene00004916">
    <property type="expression patterns" value="Expressed in germ line (C elegans) and 4 other cell types or tissues"/>
</dbReference>
<dbReference type="ExpressionAtlas" id="Q10013">
    <property type="expression patterns" value="baseline and differential"/>
</dbReference>
<dbReference type="GO" id="GO:0071013">
    <property type="term" value="C:catalytic step 2 spliceosome"/>
    <property type="evidence" value="ECO:0000318"/>
    <property type="project" value="GO_Central"/>
</dbReference>
<dbReference type="GO" id="GO:0000243">
    <property type="term" value="C:commitment complex"/>
    <property type="evidence" value="ECO:0000318"/>
    <property type="project" value="GO_Central"/>
</dbReference>
<dbReference type="GO" id="GO:0005829">
    <property type="term" value="C:cytosol"/>
    <property type="evidence" value="ECO:0007669"/>
    <property type="project" value="UniProtKB-SubCell"/>
</dbReference>
<dbReference type="GO" id="GO:0043186">
    <property type="term" value="C:P granule"/>
    <property type="evidence" value="ECO:0000314"/>
    <property type="project" value="WormBase"/>
</dbReference>
<dbReference type="GO" id="GO:0034715">
    <property type="term" value="C:pICln-Sm protein complex"/>
    <property type="evidence" value="ECO:0000318"/>
    <property type="project" value="GO_Central"/>
</dbReference>
<dbReference type="GO" id="GO:0071011">
    <property type="term" value="C:precatalytic spliceosome"/>
    <property type="evidence" value="ECO:0000318"/>
    <property type="project" value="GO_Central"/>
</dbReference>
<dbReference type="GO" id="GO:0034719">
    <property type="term" value="C:SMN-Sm protein complex"/>
    <property type="evidence" value="ECO:0000318"/>
    <property type="project" value="GO_Central"/>
</dbReference>
<dbReference type="GO" id="GO:0097526">
    <property type="term" value="C:spliceosomal tri-snRNP complex"/>
    <property type="evidence" value="ECO:0000318"/>
    <property type="project" value="GO_Central"/>
</dbReference>
<dbReference type="GO" id="GO:0005685">
    <property type="term" value="C:U1 snRNP"/>
    <property type="evidence" value="ECO:0000318"/>
    <property type="project" value="GO_Central"/>
</dbReference>
<dbReference type="GO" id="GO:0005686">
    <property type="term" value="C:U2 snRNP"/>
    <property type="evidence" value="ECO:0000318"/>
    <property type="project" value="GO_Central"/>
</dbReference>
<dbReference type="GO" id="GO:0005687">
    <property type="term" value="C:U4 snRNP"/>
    <property type="evidence" value="ECO:0000318"/>
    <property type="project" value="GO_Central"/>
</dbReference>
<dbReference type="GO" id="GO:0005682">
    <property type="term" value="C:U5 snRNP"/>
    <property type="evidence" value="ECO:0000318"/>
    <property type="project" value="GO_Central"/>
</dbReference>
<dbReference type="GO" id="GO:0003723">
    <property type="term" value="F:RNA binding"/>
    <property type="evidence" value="ECO:0000318"/>
    <property type="project" value="GO_Central"/>
</dbReference>
<dbReference type="GO" id="GO:0000387">
    <property type="term" value="P:spliceosomal snRNP assembly"/>
    <property type="evidence" value="ECO:0000318"/>
    <property type="project" value="GO_Central"/>
</dbReference>
<dbReference type="CDD" id="cd01724">
    <property type="entry name" value="Sm_D1"/>
    <property type="match status" value="1"/>
</dbReference>
<dbReference type="FunFam" id="2.30.30.100:FF:000016">
    <property type="entry name" value="Small nuclear ribonucleoprotein Sm D1"/>
    <property type="match status" value="1"/>
</dbReference>
<dbReference type="Gene3D" id="2.30.30.100">
    <property type="match status" value="1"/>
</dbReference>
<dbReference type="InterPro" id="IPR027141">
    <property type="entry name" value="LSm4/Sm_D1/D3"/>
</dbReference>
<dbReference type="InterPro" id="IPR010920">
    <property type="entry name" value="LSM_dom_sf"/>
</dbReference>
<dbReference type="InterPro" id="IPR047575">
    <property type="entry name" value="Sm"/>
</dbReference>
<dbReference type="InterPro" id="IPR034102">
    <property type="entry name" value="Sm_D1"/>
</dbReference>
<dbReference type="InterPro" id="IPR001163">
    <property type="entry name" value="Sm_dom_euk/arc"/>
</dbReference>
<dbReference type="PANTHER" id="PTHR23338">
    <property type="entry name" value="SMALL NUCLEAR RIBONUCLEOPROTEIN SM"/>
    <property type="match status" value="1"/>
</dbReference>
<dbReference type="Pfam" id="PF01423">
    <property type="entry name" value="LSM"/>
    <property type="match status" value="1"/>
</dbReference>
<dbReference type="SMART" id="SM00651">
    <property type="entry name" value="Sm"/>
    <property type="match status" value="1"/>
</dbReference>
<dbReference type="SUPFAM" id="SSF50182">
    <property type="entry name" value="Sm-like ribonucleoproteins"/>
    <property type="match status" value="1"/>
</dbReference>
<dbReference type="PROSITE" id="PS52002">
    <property type="entry name" value="SM"/>
    <property type="match status" value="1"/>
</dbReference>
<evidence type="ECO:0000250" key="1">
    <source>
        <dbReference type="UniProtKB" id="P62314"/>
    </source>
</evidence>
<evidence type="ECO:0000255" key="2">
    <source>
        <dbReference type="PROSITE-ProRule" id="PRU01346"/>
    </source>
</evidence>
<evidence type="ECO:0000256" key="3">
    <source>
        <dbReference type="SAM" id="MobiDB-lite"/>
    </source>
</evidence>
<evidence type="ECO:0000305" key="4"/>
<sequence length="126" mass="13625">MKLVRFLMKLSHETVNIELKNGTQVSGTIMGVDVAMNTHLRAVSMTVKNKEPVKLDTLSIRGNNIRYIILPDPLALDTLLIDDEPRKKARAARAGASRGRGRGGMRGGRGGRGRGRGGPRGGGPRR</sequence>
<accession>Q10013</accession>
<gene>
    <name type="primary">snr-3</name>
    <name type="ORF">T28D9.10</name>
</gene>